<protein>
    <recommendedName>
        <fullName evidence="1">NADPH-dependent 7-cyano-7-deazaguanine reductase</fullName>
        <ecNumber evidence="1">1.7.1.13</ecNumber>
    </recommendedName>
    <alternativeName>
        <fullName evidence="1">7-cyano-7-carbaguanine reductase</fullName>
    </alternativeName>
    <alternativeName>
        <fullName evidence="1">NADPH-dependent nitrile oxidoreductase</fullName>
    </alternativeName>
    <alternativeName>
        <fullName evidence="1">PreQ(0) reductase</fullName>
    </alternativeName>
</protein>
<proteinExistence type="inferred from homology"/>
<organism>
    <name type="scientific">Polaromonas naphthalenivorans (strain CJ2)</name>
    <dbReference type="NCBI Taxonomy" id="365044"/>
    <lineage>
        <taxon>Bacteria</taxon>
        <taxon>Pseudomonadati</taxon>
        <taxon>Pseudomonadota</taxon>
        <taxon>Betaproteobacteria</taxon>
        <taxon>Burkholderiales</taxon>
        <taxon>Comamonadaceae</taxon>
        <taxon>Polaromonas</taxon>
    </lineage>
</organism>
<name>QUEF_POLNA</name>
<keyword id="KW-0963">Cytoplasm</keyword>
<keyword id="KW-0521">NADP</keyword>
<keyword id="KW-0560">Oxidoreductase</keyword>
<keyword id="KW-0671">Queuosine biosynthesis</keyword>
<keyword id="KW-1185">Reference proteome</keyword>
<gene>
    <name evidence="1" type="primary">queF</name>
    <name type="ordered locus">Pnap_3164</name>
</gene>
<sequence length="281" mass="31676">MNTPEHSELGKSSAYVDQYDASLLFPIPRLAKRLEMGVGATPIFFGADLWTAFELSWLNLRGKPQVALAQFIVPCETPNIIESKSFKLYLNSFNNTRFPDAAEVQARLRADISEAAWRGAPQASTVGVKLLLPEMFDREDVAELDGLSLDRLDVECSRYTPAPDLLSAVFDEPPVSEVLTSNLLKSNCLVTGQPDWGSVRIAYSGPQINQEGLLQYIVSFRNHNEFHEQCVERIFMDLWTRCKPVKLTVYARYTRRGGLDINPFRTSHPQAIPPNIRMARQ</sequence>
<feature type="chain" id="PRO_1000062348" description="NADPH-dependent 7-cyano-7-deazaguanine reductase">
    <location>
        <begin position="1"/>
        <end position="281"/>
    </location>
</feature>
<feature type="active site" description="Thioimide intermediate" evidence="1">
    <location>
        <position position="188"/>
    </location>
</feature>
<feature type="active site" description="Proton donor" evidence="1">
    <location>
        <position position="195"/>
    </location>
</feature>
<feature type="binding site" evidence="1">
    <location>
        <begin position="81"/>
        <end position="83"/>
    </location>
    <ligand>
        <name>substrate</name>
    </ligand>
</feature>
<feature type="binding site" evidence="1">
    <location>
        <begin position="83"/>
        <end position="84"/>
    </location>
    <ligand>
        <name>NADPH</name>
        <dbReference type="ChEBI" id="CHEBI:57783"/>
    </ligand>
</feature>
<feature type="binding site" evidence="1">
    <location>
        <begin position="227"/>
        <end position="228"/>
    </location>
    <ligand>
        <name>substrate</name>
    </ligand>
</feature>
<feature type="binding site" evidence="1">
    <location>
        <begin position="256"/>
        <end position="257"/>
    </location>
    <ligand>
        <name>NADPH</name>
        <dbReference type="ChEBI" id="CHEBI:57783"/>
    </ligand>
</feature>
<dbReference type="EC" id="1.7.1.13" evidence="1"/>
<dbReference type="EMBL" id="CP000529">
    <property type="protein sequence ID" value="ABM38462.1"/>
    <property type="molecule type" value="Genomic_DNA"/>
</dbReference>
<dbReference type="RefSeq" id="WP_011802533.1">
    <property type="nucleotide sequence ID" value="NC_008781.1"/>
</dbReference>
<dbReference type="SMR" id="A1VS34"/>
<dbReference type="STRING" id="365044.Pnap_3164"/>
<dbReference type="KEGG" id="pna:Pnap_3164"/>
<dbReference type="eggNOG" id="COG0780">
    <property type="taxonomic scope" value="Bacteria"/>
</dbReference>
<dbReference type="eggNOG" id="COG2904">
    <property type="taxonomic scope" value="Bacteria"/>
</dbReference>
<dbReference type="HOGENOM" id="CLU_054738_0_0_4"/>
<dbReference type="OrthoDB" id="9789995at2"/>
<dbReference type="UniPathway" id="UPA00392"/>
<dbReference type="Proteomes" id="UP000000644">
    <property type="component" value="Chromosome"/>
</dbReference>
<dbReference type="GO" id="GO:0005737">
    <property type="term" value="C:cytoplasm"/>
    <property type="evidence" value="ECO:0007669"/>
    <property type="project" value="UniProtKB-SubCell"/>
</dbReference>
<dbReference type="GO" id="GO:0033739">
    <property type="term" value="F:preQ1 synthase activity"/>
    <property type="evidence" value="ECO:0007669"/>
    <property type="project" value="UniProtKB-UniRule"/>
</dbReference>
<dbReference type="GO" id="GO:0008616">
    <property type="term" value="P:queuosine biosynthetic process"/>
    <property type="evidence" value="ECO:0007669"/>
    <property type="project" value="UniProtKB-UniRule"/>
</dbReference>
<dbReference type="GO" id="GO:0006400">
    <property type="term" value="P:tRNA modification"/>
    <property type="evidence" value="ECO:0007669"/>
    <property type="project" value="UniProtKB-UniRule"/>
</dbReference>
<dbReference type="Gene3D" id="3.30.1130.10">
    <property type="match status" value="2"/>
</dbReference>
<dbReference type="HAMAP" id="MF_00817">
    <property type="entry name" value="QueF_type2"/>
    <property type="match status" value="1"/>
</dbReference>
<dbReference type="InterPro" id="IPR043133">
    <property type="entry name" value="GTP-CH-I_C/QueF"/>
</dbReference>
<dbReference type="InterPro" id="IPR050084">
    <property type="entry name" value="NADPH_dep_7-cyano-7-deazaG_red"/>
</dbReference>
<dbReference type="InterPro" id="IPR029500">
    <property type="entry name" value="QueF"/>
</dbReference>
<dbReference type="InterPro" id="IPR029139">
    <property type="entry name" value="QueF_N"/>
</dbReference>
<dbReference type="InterPro" id="IPR016428">
    <property type="entry name" value="QueF_type2"/>
</dbReference>
<dbReference type="NCBIfam" id="TIGR03138">
    <property type="entry name" value="QueF"/>
    <property type="match status" value="1"/>
</dbReference>
<dbReference type="PANTHER" id="PTHR34354">
    <property type="entry name" value="NADPH-DEPENDENT 7-CYANO-7-DEAZAGUANINE REDUCTASE"/>
    <property type="match status" value="1"/>
</dbReference>
<dbReference type="PANTHER" id="PTHR34354:SF1">
    <property type="entry name" value="NADPH-DEPENDENT 7-CYANO-7-DEAZAGUANINE REDUCTASE"/>
    <property type="match status" value="1"/>
</dbReference>
<dbReference type="Pfam" id="PF14489">
    <property type="entry name" value="QueF"/>
    <property type="match status" value="1"/>
</dbReference>
<dbReference type="Pfam" id="PF14819">
    <property type="entry name" value="QueF_N"/>
    <property type="match status" value="1"/>
</dbReference>
<dbReference type="PIRSF" id="PIRSF004750">
    <property type="entry name" value="Nitrile_oxidored_YqcD_prd"/>
    <property type="match status" value="1"/>
</dbReference>
<dbReference type="SUPFAM" id="SSF55620">
    <property type="entry name" value="Tetrahydrobiopterin biosynthesis enzymes-like"/>
    <property type="match status" value="1"/>
</dbReference>
<comment type="function">
    <text evidence="1">Catalyzes the NADPH-dependent reduction of 7-cyano-7-deazaguanine (preQ0) to 7-aminomethyl-7-deazaguanine (preQ1).</text>
</comment>
<comment type="catalytic activity">
    <reaction evidence="1">
        <text>7-aminomethyl-7-carbaguanine + 2 NADP(+) = 7-cyano-7-deazaguanine + 2 NADPH + 3 H(+)</text>
        <dbReference type="Rhea" id="RHEA:13409"/>
        <dbReference type="ChEBI" id="CHEBI:15378"/>
        <dbReference type="ChEBI" id="CHEBI:45075"/>
        <dbReference type="ChEBI" id="CHEBI:57783"/>
        <dbReference type="ChEBI" id="CHEBI:58349"/>
        <dbReference type="ChEBI" id="CHEBI:58703"/>
        <dbReference type="EC" id="1.7.1.13"/>
    </reaction>
</comment>
<comment type="pathway">
    <text evidence="1">tRNA modification; tRNA-queuosine biosynthesis.</text>
</comment>
<comment type="subunit">
    <text evidence="1">Homodimer.</text>
</comment>
<comment type="subcellular location">
    <subcellularLocation>
        <location evidence="1">Cytoplasm</location>
    </subcellularLocation>
</comment>
<comment type="similarity">
    <text evidence="1">Belongs to the GTP cyclohydrolase I family. QueF type 2 subfamily.</text>
</comment>
<accession>A1VS34</accession>
<reference key="1">
    <citation type="journal article" date="2009" name="Environ. Microbiol.">
        <title>The genome of Polaromonas naphthalenivorans strain CJ2, isolated from coal tar-contaminated sediment, reveals physiological and metabolic versatility and evolution through extensive horizontal gene transfer.</title>
        <authorList>
            <person name="Yagi J.M."/>
            <person name="Sims D."/>
            <person name="Brettin T."/>
            <person name="Bruce D."/>
            <person name="Madsen E.L."/>
        </authorList>
    </citation>
    <scope>NUCLEOTIDE SEQUENCE [LARGE SCALE GENOMIC DNA]</scope>
    <source>
        <strain>CJ2</strain>
    </source>
</reference>
<evidence type="ECO:0000255" key="1">
    <source>
        <dbReference type="HAMAP-Rule" id="MF_00817"/>
    </source>
</evidence>